<organism>
    <name type="scientific">Homo sapiens</name>
    <name type="common">Human</name>
    <dbReference type="NCBI Taxonomy" id="9606"/>
    <lineage>
        <taxon>Eukaryota</taxon>
        <taxon>Metazoa</taxon>
        <taxon>Chordata</taxon>
        <taxon>Craniata</taxon>
        <taxon>Vertebrata</taxon>
        <taxon>Euteleostomi</taxon>
        <taxon>Mammalia</taxon>
        <taxon>Eutheria</taxon>
        <taxon>Euarchontoglires</taxon>
        <taxon>Primates</taxon>
        <taxon>Haplorrhini</taxon>
        <taxon>Catarrhini</taxon>
        <taxon>Hominidae</taxon>
        <taxon>Homo</taxon>
    </lineage>
</organism>
<accession>Q99742</accession>
<accession>B4DR69</accession>
<accession>Q99632</accession>
<accession>Q9BY83</accession>
<dbReference type="EMBL" id="U77968">
    <property type="protein sequence ID" value="AAB47248.1"/>
    <property type="molecule type" value="mRNA"/>
</dbReference>
<dbReference type="EMBL" id="AB054002">
    <property type="protein sequence ID" value="BAB21098.1"/>
    <property type="molecule type" value="mRNA"/>
</dbReference>
<dbReference type="EMBL" id="AK299128">
    <property type="protein sequence ID" value="BAG61181.1"/>
    <property type="molecule type" value="mRNA"/>
</dbReference>
<dbReference type="EMBL" id="AC008755">
    <property type="status" value="NOT_ANNOTATED_CDS"/>
    <property type="molecule type" value="Genomic_DNA"/>
</dbReference>
<dbReference type="EMBL" id="BC039016">
    <property type="protein sequence ID" value="AAH39016.1"/>
    <property type="molecule type" value="mRNA"/>
</dbReference>
<dbReference type="EMBL" id="U51628">
    <property type="protein sequence ID" value="AAC51214.1"/>
    <property type="molecule type" value="mRNA"/>
</dbReference>
<dbReference type="CCDS" id="CCDS12694.1">
    <molecule id="Q99742-1"/>
</dbReference>
<dbReference type="CCDS" id="CCDS82371.1">
    <molecule id="Q99742-2"/>
</dbReference>
<dbReference type="RefSeq" id="NP_001308015.1">
    <molecule id="Q99742-2"/>
    <property type="nucleotide sequence ID" value="NM_001321086.2"/>
</dbReference>
<dbReference type="RefSeq" id="NP_002508.2">
    <molecule id="Q99742-1"/>
    <property type="nucleotide sequence ID" value="NM_002517.3"/>
</dbReference>
<dbReference type="SMR" id="Q99742"/>
<dbReference type="BioGRID" id="110922">
    <property type="interactions" value="290"/>
</dbReference>
<dbReference type="FunCoup" id="Q99742">
    <property type="interactions" value="232"/>
</dbReference>
<dbReference type="IntAct" id="Q99742">
    <property type="interactions" value="243"/>
</dbReference>
<dbReference type="STRING" id="9606.ENSP00000469142"/>
<dbReference type="GlyGen" id="Q99742">
    <property type="glycosylation" value="5 sites, 1 O-linked glycan (1 site)"/>
</dbReference>
<dbReference type="iPTMnet" id="Q99742"/>
<dbReference type="PhosphoSitePlus" id="Q99742"/>
<dbReference type="BioMuta" id="NPAS1"/>
<dbReference type="DMDM" id="59803108"/>
<dbReference type="MassIVE" id="Q99742"/>
<dbReference type="PaxDb" id="9606-ENSP00000469142"/>
<dbReference type="PeptideAtlas" id="Q99742"/>
<dbReference type="ProteomicsDB" id="78453">
    <molecule id="Q99742-1"/>
</dbReference>
<dbReference type="Antibodypedia" id="18161">
    <property type="antibodies" value="227 antibodies from 31 providers"/>
</dbReference>
<dbReference type="DNASU" id="4861"/>
<dbReference type="Ensembl" id="ENST00000439365.6">
    <molecule id="Q99742-2"/>
    <property type="protein sequence ID" value="ENSP00000398689.2"/>
    <property type="gene ID" value="ENSG00000130751.10"/>
</dbReference>
<dbReference type="Ensembl" id="ENST00000449844.6">
    <molecule id="Q99742-1"/>
    <property type="protein sequence ID" value="ENSP00000405290.1"/>
    <property type="gene ID" value="ENSG00000130751.10"/>
</dbReference>
<dbReference type="Ensembl" id="ENST00000602212.6">
    <molecule id="Q99742-1"/>
    <property type="protein sequence ID" value="ENSP00000469142.1"/>
    <property type="gene ID" value="ENSG00000130751.10"/>
</dbReference>
<dbReference type="GeneID" id="4861"/>
<dbReference type="KEGG" id="hsa:4861"/>
<dbReference type="MANE-Select" id="ENST00000602212.6">
    <property type="protein sequence ID" value="ENSP00000469142.1"/>
    <property type="RefSeq nucleotide sequence ID" value="NM_002517.4"/>
    <property type="RefSeq protein sequence ID" value="NP_002508.2"/>
</dbReference>
<dbReference type="UCSC" id="uc002pfw.4">
    <molecule id="Q99742-1"/>
    <property type="organism name" value="human"/>
</dbReference>
<dbReference type="AGR" id="HGNC:7894"/>
<dbReference type="CTD" id="4861"/>
<dbReference type="DisGeNET" id="4861"/>
<dbReference type="GeneCards" id="NPAS1"/>
<dbReference type="HGNC" id="HGNC:7894">
    <property type="gene designation" value="NPAS1"/>
</dbReference>
<dbReference type="HPA" id="ENSG00000130751">
    <property type="expression patterns" value="Tissue enhanced (brain, skin)"/>
</dbReference>
<dbReference type="MIM" id="603346">
    <property type="type" value="gene"/>
</dbReference>
<dbReference type="neXtProt" id="NX_Q99742"/>
<dbReference type="OpenTargets" id="ENSG00000130751"/>
<dbReference type="PharmGKB" id="PA31695"/>
<dbReference type="VEuPathDB" id="HostDB:ENSG00000130751"/>
<dbReference type="eggNOG" id="KOG3558">
    <property type="taxonomic scope" value="Eukaryota"/>
</dbReference>
<dbReference type="GeneTree" id="ENSGT00940000161295"/>
<dbReference type="HOGENOM" id="CLU_010044_6_3_1"/>
<dbReference type="InParanoid" id="Q99742"/>
<dbReference type="OMA" id="MTCEDAS"/>
<dbReference type="OrthoDB" id="6021714at2759"/>
<dbReference type="PAN-GO" id="Q99742">
    <property type="GO annotations" value="3 GO annotations based on evolutionary models"/>
</dbReference>
<dbReference type="PhylomeDB" id="Q99742"/>
<dbReference type="TreeFam" id="TF317772"/>
<dbReference type="PathwayCommons" id="Q99742"/>
<dbReference type="SignaLink" id="Q99742"/>
<dbReference type="SIGNOR" id="Q99742"/>
<dbReference type="BioGRID-ORCS" id="4861">
    <property type="hits" value="19 hits in 1167 CRISPR screens"/>
</dbReference>
<dbReference type="ChiTaRS" id="NPAS1">
    <property type="organism name" value="human"/>
</dbReference>
<dbReference type="GenomeRNAi" id="4861"/>
<dbReference type="Pharos" id="Q99742">
    <property type="development level" value="Tbio"/>
</dbReference>
<dbReference type="PRO" id="PR:Q99742"/>
<dbReference type="Proteomes" id="UP000005640">
    <property type="component" value="Chromosome 19"/>
</dbReference>
<dbReference type="RNAct" id="Q99742">
    <property type="molecule type" value="protein"/>
</dbReference>
<dbReference type="Bgee" id="ENSG00000130751">
    <property type="expression patterns" value="Expressed in right frontal lobe and 120 other cell types or tissues"/>
</dbReference>
<dbReference type="ExpressionAtlas" id="Q99742">
    <property type="expression patterns" value="baseline and differential"/>
</dbReference>
<dbReference type="GO" id="GO:0000785">
    <property type="term" value="C:chromatin"/>
    <property type="evidence" value="ECO:0000247"/>
    <property type="project" value="NTNU_SB"/>
</dbReference>
<dbReference type="GO" id="GO:0005634">
    <property type="term" value="C:nucleus"/>
    <property type="evidence" value="ECO:0007669"/>
    <property type="project" value="UniProtKB-SubCell"/>
</dbReference>
<dbReference type="GO" id="GO:0003700">
    <property type="term" value="F:DNA-binding transcription factor activity"/>
    <property type="evidence" value="ECO:0000304"/>
    <property type="project" value="ProtInc"/>
</dbReference>
<dbReference type="GO" id="GO:0000981">
    <property type="term" value="F:DNA-binding transcription factor activity, RNA polymerase II-specific"/>
    <property type="evidence" value="ECO:0000247"/>
    <property type="project" value="NTNU_SB"/>
</dbReference>
<dbReference type="GO" id="GO:0046982">
    <property type="term" value="F:protein heterodimerization activity"/>
    <property type="evidence" value="ECO:0000250"/>
    <property type="project" value="UniProtKB"/>
</dbReference>
<dbReference type="GO" id="GO:0000977">
    <property type="term" value="F:RNA polymerase II transcription regulatory region sequence-specific DNA binding"/>
    <property type="evidence" value="ECO:0000318"/>
    <property type="project" value="GO_Central"/>
</dbReference>
<dbReference type="GO" id="GO:0007417">
    <property type="term" value="P:central nervous system development"/>
    <property type="evidence" value="ECO:0000304"/>
    <property type="project" value="ProtInc"/>
</dbReference>
<dbReference type="GO" id="GO:0042711">
    <property type="term" value="P:maternal behavior"/>
    <property type="evidence" value="ECO:0007669"/>
    <property type="project" value="Ensembl"/>
</dbReference>
<dbReference type="GO" id="GO:0045892">
    <property type="term" value="P:negative regulation of DNA-templated transcription"/>
    <property type="evidence" value="ECO:0000250"/>
    <property type="project" value="UniProtKB"/>
</dbReference>
<dbReference type="GO" id="GO:0000122">
    <property type="term" value="P:negative regulation of transcription by RNA polymerase II"/>
    <property type="evidence" value="ECO:0007669"/>
    <property type="project" value="Ensembl"/>
</dbReference>
<dbReference type="GO" id="GO:0006357">
    <property type="term" value="P:regulation of transcription by RNA polymerase II"/>
    <property type="evidence" value="ECO:0000318"/>
    <property type="project" value="GO_Central"/>
</dbReference>
<dbReference type="GO" id="GO:0001964">
    <property type="term" value="P:startle response"/>
    <property type="evidence" value="ECO:0007669"/>
    <property type="project" value="Ensembl"/>
</dbReference>
<dbReference type="CDD" id="cd19731">
    <property type="entry name" value="bHLH-PAS_NPAS1_PASD5"/>
    <property type="match status" value="1"/>
</dbReference>
<dbReference type="CDD" id="cd00130">
    <property type="entry name" value="PAS"/>
    <property type="match status" value="2"/>
</dbReference>
<dbReference type="FunFam" id="4.10.280.10:FF:000083">
    <property type="entry name" value="Neuronal PAS domain protein 1"/>
    <property type="match status" value="1"/>
</dbReference>
<dbReference type="FunFam" id="3.30.450.20:FF:000025">
    <property type="entry name" value="Neuronal PAS domain protein 3 isoform 1"/>
    <property type="match status" value="1"/>
</dbReference>
<dbReference type="FunFam" id="3.30.450.20:FF:000021">
    <property type="entry name" value="Neuronal PAS domain-containing protein 3"/>
    <property type="match status" value="1"/>
</dbReference>
<dbReference type="Gene3D" id="4.10.280.10">
    <property type="entry name" value="Helix-loop-helix DNA-binding domain"/>
    <property type="match status" value="1"/>
</dbReference>
<dbReference type="Gene3D" id="3.30.450.20">
    <property type="entry name" value="PAS domain"/>
    <property type="match status" value="2"/>
</dbReference>
<dbReference type="InterPro" id="IPR011598">
    <property type="entry name" value="bHLH_dom"/>
</dbReference>
<dbReference type="InterPro" id="IPR036638">
    <property type="entry name" value="HLH_DNA-bd_sf"/>
</dbReference>
<dbReference type="InterPro" id="IPR000014">
    <property type="entry name" value="PAS"/>
</dbReference>
<dbReference type="InterPro" id="IPR035965">
    <property type="entry name" value="PAS-like_dom_sf"/>
</dbReference>
<dbReference type="InterPro" id="IPR013767">
    <property type="entry name" value="PAS_fold"/>
</dbReference>
<dbReference type="InterPro" id="IPR013655">
    <property type="entry name" value="PAS_fold_3"/>
</dbReference>
<dbReference type="PANTHER" id="PTHR23043">
    <property type="entry name" value="HYPOXIA-INDUCIBLE FACTOR 1 ALPHA"/>
    <property type="match status" value="1"/>
</dbReference>
<dbReference type="PANTHER" id="PTHR23043:SF25">
    <property type="entry name" value="NEURONAL PAS DOMAIN-CONTAINING PROTEIN 1"/>
    <property type="match status" value="1"/>
</dbReference>
<dbReference type="Pfam" id="PF23171">
    <property type="entry name" value="bHLH_HIF1A"/>
    <property type="match status" value="1"/>
</dbReference>
<dbReference type="Pfam" id="PF00989">
    <property type="entry name" value="PAS"/>
    <property type="match status" value="1"/>
</dbReference>
<dbReference type="Pfam" id="PF08447">
    <property type="entry name" value="PAS_3"/>
    <property type="match status" value="1"/>
</dbReference>
<dbReference type="SMART" id="SM00353">
    <property type="entry name" value="HLH"/>
    <property type="match status" value="1"/>
</dbReference>
<dbReference type="SMART" id="SM00091">
    <property type="entry name" value="PAS"/>
    <property type="match status" value="2"/>
</dbReference>
<dbReference type="SUPFAM" id="SSF47459">
    <property type="entry name" value="HLH, helix-loop-helix DNA-binding domain"/>
    <property type="match status" value="1"/>
</dbReference>
<dbReference type="SUPFAM" id="SSF55785">
    <property type="entry name" value="PYP-like sensor domain (PAS domain)"/>
    <property type="match status" value="2"/>
</dbReference>
<dbReference type="PROSITE" id="PS50888">
    <property type="entry name" value="BHLH"/>
    <property type="match status" value="1"/>
</dbReference>
<dbReference type="PROSITE" id="PS50112">
    <property type="entry name" value="PAS"/>
    <property type="match status" value="1"/>
</dbReference>
<proteinExistence type="evidence at protein level"/>
<comment type="function">
    <text evidence="1 2">May control regulatory pathways relevant to schizophrenia and to psychotic illness. May play a role in late central nervous system development by modulating EPO expression in response to cellular oxygen level (By similarity). Forms a heterodimer that binds core DNA sequence 5'-TACGTG-3' within the hypoxia response element (HRE) leading to transcriptional repression on its target gene TH (By similarity).</text>
</comment>
<comment type="subunit">
    <text evidence="1 2">Efficient DNA binding requires dimerization with another bHLH protein. Interacts with ARNT; forms a heterodimer that binds core DNA sequence 5'-[AG]CGTG-3' within the hypoxia response element (HRE) leading to a transcriptional repressor on its target gene TH (By similarity).</text>
</comment>
<comment type="subcellular location">
    <subcellularLocation>
        <location evidence="4">Nucleus</location>
    </subcellularLocation>
</comment>
<comment type="alternative products">
    <event type="alternative splicing"/>
    <isoform>
        <id>Q99742-1</id>
        <name>1</name>
        <sequence type="displayed"/>
    </isoform>
    <isoform>
        <id>Q99742-2</id>
        <name>2</name>
        <sequence type="described" ref="VSP_054280 VSP_054281 VSP_054282"/>
    </isoform>
</comment>
<name>NPAS1_HUMAN</name>
<sequence length="590" mass="62702">MAAPYPGSGGGSEVKCVGGRGASVPWDFLPGLMVKAPSGPCLQAQRKEKSRNAARSRRGKENLEFFELAKLLPLPGAISSQLDKASIVRLSVTYLRLRRFAALGAPPWGLRAAGPPAGLAPGRRGPAALVSEVFEQHLGGHILQSLDGFVFALNQEGKFLYISETVSIYLGLSQVEMTGSSVFDYIHPGDHSEVLEQLGLRTPTPGPPTPPSVSSSSSSSSSLADTPEIEASLTKVPPSSLVQERSFFVRMKSTLTKRGLHVKASGYKVIHVTGRLRAHALGLVALGHTLPPAPLAELPLHGHMIVFRLSLGLTILACESRVSDHMDLGPSELVGRSCYQFVHGQDATRIRQSHVDLLDKGQVMTGYYRWLQRAGGFVWLQSVATVAGSGKSPGEHHVLWVSHVLSQAEGGQTPLDAFQLPASVACEEASSPGPEPTEPEPPTEGKQAAPAENEAPQTQGKRIKVEPGPRETKGSEDSGDEDPSSHPATPRPEFTSVIRAGVLKQDPVRPWGLAPPGDPPPTLLHAGFLPPVVRGLCTPGTIRYGPAELGLVYPHLQRLGPGPALPEAFYPPLGLPYPGPAGTRLPRKGD</sequence>
<keyword id="KW-0025">Alternative splicing</keyword>
<keyword id="KW-0238">DNA-binding</keyword>
<keyword id="KW-0539">Nucleus</keyword>
<keyword id="KW-1267">Proteomics identification</keyword>
<keyword id="KW-1185">Reference proteome</keyword>
<keyword id="KW-0677">Repeat</keyword>
<keyword id="KW-0804">Transcription</keyword>
<keyword id="KW-0805">Transcription regulation</keyword>
<gene>
    <name type="primary">NPAS1</name>
    <name type="synonym">BHLHE11</name>
    <name type="synonym">MOP5</name>
    <name type="synonym">PASD5</name>
</gene>
<reference key="1">
    <citation type="journal article" date="1997" name="Proc. Natl. Acad. Sci. U.S.A.">
        <title>Molecular characterization of two mammalian bHLH-PAS domain proteins selectively expressed in the central nervous system.</title>
        <authorList>
            <person name="Zhou Y.-D."/>
            <person name="Barnard M."/>
            <person name="Tian H."/>
            <person name="Li X."/>
            <person name="Ring H.Z."/>
            <person name="Francke U."/>
            <person name="Shelton J."/>
            <person name="Richardson J."/>
            <person name="Russell D.W."/>
            <person name="McKnight S.L."/>
        </authorList>
    </citation>
    <scope>NUCLEOTIDE SEQUENCE [MRNA] (ISOFORM 1)</scope>
    <source>
        <tissue>Brain</tissue>
    </source>
</reference>
<reference key="2">
    <citation type="journal article" date="2004" name="Nat. Genet.">
        <title>Complete sequencing and characterization of 21,243 full-length human cDNAs.</title>
        <authorList>
            <person name="Ota T."/>
            <person name="Suzuki Y."/>
            <person name="Nishikawa T."/>
            <person name="Otsuki T."/>
            <person name="Sugiyama T."/>
            <person name="Irie R."/>
            <person name="Wakamatsu A."/>
            <person name="Hayashi K."/>
            <person name="Sato H."/>
            <person name="Nagai K."/>
            <person name="Kimura K."/>
            <person name="Makita H."/>
            <person name="Sekine M."/>
            <person name="Obayashi M."/>
            <person name="Nishi T."/>
            <person name="Shibahara T."/>
            <person name="Tanaka T."/>
            <person name="Ishii S."/>
            <person name="Yamamoto J."/>
            <person name="Saito K."/>
            <person name="Kawai Y."/>
            <person name="Isono Y."/>
            <person name="Nakamura Y."/>
            <person name="Nagahari K."/>
            <person name="Murakami K."/>
            <person name="Yasuda T."/>
            <person name="Iwayanagi T."/>
            <person name="Wagatsuma M."/>
            <person name="Shiratori A."/>
            <person name="Sudo H."/>
            <person name="Hosoiri T."/>
            <person name="Kaku Y."/>
            <person name="Kodaira H."/>
            <person name="Kondo H."/>
            <person name="Sugawara M."/>
            <person name="Takahashi M."/>
            <person name="Kanda K."/>
            <person name="Yokoi T."/>
            <person name="Furuya T."/>
            <person name="Kikkawa E."/>
            <person name="Omura Y."/>
            <person name="Abe K."/>
            <person name="Kamihara K."/>
            <person name="Katsuta N."/>
            <person name="Sato K."/>
            <person name="Tanikawa M."/>
            <person name="Yamazaki M."/>
            <person name="Ninomiya K."/>
            <person name="Ishibashi T."/>
            <person name="Yamashita H."/>
            <person name="Murakawa K."/>
            <person name="Fujimori K."/>
            <person name="Tanai H."/>
            <person name="Kimata M."/>
            <person name="Watanabe M."/>
            <person name="Hiraoka S."/>
            <person name="Chiba Y."/>
            <person name="Ishida S."/>
            <person name="Ono Y."/>
            <person name="Takiguchi S."/>
            <person name="Watanabe S."/>
            <person name="Yosida M."/>
            <person name="Hotuta T."/>
            <person name="Kusano J."/>
            <person name="Kanehori K."/>
            <person name="Takahashi-Fujii A."/>
            <person name="Hara H."/>
            <person name="Tanase T.-O."/>
            <person name="Nomura Y."/>
            <person name="Togiya S."/>
            <person name="Komai F."/>
            <person name="Hara R."/>
            <person name="Takeuchi K."/>
            <person name="Arita M."/>
            <person name="Imose N."/>
            <person name="Musashino K."/>
            <person name="Yuuki H."/>
            <person name="Oshima A."/>
            <person name="Sasaki N."/>
            <person name="Aotsuka S."/>
            <person name="Yoshikawa Y."/>
            <person name="Matsunawa H."/>
            <person name="Ichihara T."/>
            <person name="Shiohata N."/>
            <person name="Sano S."/>
            <person name="Moriya S."/>
            <person name="Momiyama H."/>
            <person name="Satoh N."/>
            <person name="Takami S."/>
            <person name="Terashima Y."/>
            <person name="Suzuki O."/>
            <person name="Nakagawa S."/>
            <person name="Senoh A."/>
            <person name="Mizoguchi H."/>
            <person name="Goto Y."/>
            <person name="Shimizu F."/>
            <person name="Wakebe H."/>
            <person name="Hishigaki H."/>
            <person name="Watanabe T."/>
            <person name="Sugiyama A."/>
            <person name="Takemoto M."/>
            <person name="Kawakami B."/>
            <person name="Yamazaki M."/>
            <person name="Watanabe K."/>
            <person name="Kumagai A."/>
            <person name="Itakura S."/>
            <person name="Fukuzumi Y."/>
            <person name="Fujimori Y."/>
            <person name="Komiyama M."/>
            <person name="Tashiro H."/>
            <person name="Tanigami A."/>
            <person name="Fujiwara T."/>
            <person name="Ono T."/>
            <person name="Yamada K."/>
            <person name="Fujii Y."/>
            <person name="Ozaki K."/>
            <person name="Hirao M."/>
            <person name="Ohmori Y."/>
            <person name="Kawabata A."/>
            <person name="Hikiji T."/>
            <person name="Kobatake N."/>
            <person name="Inagaki H."/>
            <person name="Ikema Y."/>
            <person name="Okamoto S."/>
            <person name="Okitani R."/>
            <person name="Kawakami T."/>
            <person name="Noguchi S."/>
            <person name="Itoh T."/>
            <person name="Shigeta K."/>
            <person name="Senba T."/>
            <person name="Matsumura K."/>
            <person name="Nakajima Y."/>
            <person name="Mizuno T."/>
            <person name="Morinaga M."/>
            <person name="Sasaki M."/>
            <person name="Togashi T."/>
            <person name="Oyama M."/>
            <person name="Hata H."/>
            <person name="Watanabe M."/>
            <person name="Komatsu T."/>
            <person name="Mizushima-Sugano J."/>
            <person name="Satoh T."/>
            <person name="Shirai Y."/>
            <person name="Takahashi Y."/>
            <person name="Nakagawa K."/>
            <person name="Okumura K."/>
            <person name="Nagase T."/>
            <person name="Nomura N."/>
            <person name="Kikuchi H."/>
            <person name="Masuho Y."/>
            <person name="Yamashita R."/>
            <person name="Nakai K."/>
            <person name="Yada T."/>
            <person name="Nakamura Y."/>
            <person name="Ohara O."/>
            <person name="Isogai T."/>
            <person name="Sugano S."/>
        </authorList>
    </citation>
    <scope>NUCLEOTIDE SEQUENCE [LARGE SCALE MRNA] (ISOFORM 2)</scope>
</reference>
<reference key="3">
    <citation type="journal article" date="2004" name="Nature">
        <title>The DNA sequence and biology of human chromosome 19.</title>
        <authorList>
            <person name="Grimwood J."/>
            <person name="Gordon L.A."/>
            <person name="Olsen A.S."/>
            <person name="Terry A."/>
            <person name="Schmutz J."/>
            <person name="Lamerdin J.E."/>
            <person name="Hellsten U."/>
            <person name="Goodstein D."/>
            <person name="Couronne O."/>
            <person name="Tran-Gyamfi M."/>
            <person name="Aerts A."/>
            <person name="Altherr M."/>
            <person name="Ashworth L."/>
            <person name="Bajorek E."/>
            <person name="Black S."/>
            <person name="Branscomb E."/>
            <person name="Caenepeel S."/>
            <person name="Carrano A.V."/>
            <person name="Caoile C."/>
            <person name="Chan Y.M."/>
            <person name="Christensen M."/>
            <person name="Cleland C.A."/>
            <person name="Copeland A."/>
            <person name="Dalin E."/>
            <person name="Dehal P."/>
            <person name="Denys M."/>
            <person name="Detter J.C."/>
            <person name="Escobar J."/>
            <person name="Flowers D."/>
            <person name="Fotopulos D."/>
            <person name="Garcia C."/>
            <person name="Georgescu A.M."/>
            <person name="Glavina T."/>
            <person name="Gomez M."/>
            <person name="Gonzales E."/>
            <person name="Groza M."/>
            <person name="Hammon N."/>
            <person name="Hawkins T."/>
            <person name="Haydu L."/>
            <person name="Ho I."/>
            <person name="Huang W."/>
            <person name="Israni S."/>
            <person name="Jett J."/>
            <person name="Kadner K."/>
            <person name="Kimball H."/>
            <person name="Kobayashi A."/>
            <person name="Larionov V."/>
            <person name="Leem S.-H."/>
            <person name="Lopez F."/>
            <person name="Lou Y."/>
            <person name="Lowry S."/>
            <person name="Malfatti S."/>
            <person name="Martinez D."/>
            <person name="McCready P.M."/>
            <person name="Medina C."/>
            <person name="Morgan J."/>
            <person name="Nelson K."/>
            <person name="Nolan M."/>
            <person name="Ovcharenko I."/>
            <person name="Pitluck S."/>
            <person name="Pollard M."/>
            <person name="Popkie A.P."/>
            <person name="Predki P."/>
            <person name="Quan G."/>
            <person name="Ramirez L."/>
            <person name="Rash S."/>
            <person name="Retterer J."/>
            <person name="Rodriguez A."/>
            <person name="Rogers S."/>
            <person name="Salamov A."/>
            <person name="Salazar A."/>
            <person name="She X."/>
            <person name="Smith D."/>
            <person name="Slezak T."/>
            <person name="Solovyev V."/>
            <person name="Thayer N."/>
            <person name="Tice H."/>
            <person name="Tsai M."/>
            <person name="Ustaszewska A."/>
            <person name="Vo N."/>
            <person name="Wagner M."/>
            <person name="Wheeler J."/>
            <person name="Wu K."/>
            <person name="Xie G."/>
            <person name="Yang J."/>
            <person name="Dubchak I."/>
            <person name="Furey T.S."/>
            <person name="DeJong P."/>
            <person name="Dickson M."/>
            <person name="Gordon D."/>
            <person name="Eichler E.E."/>
            <person name="Pennacchio L.A."/>
            <person name="Richardson P."/>
            <person name="Stubbs L."/>
            <person name="Rokhsar D.S."/>
            <person name="Myers R.M."/>
            <person name="Rubin E.M."/>
            <person name="Lucas S.M."/>
        </authorList>
    </citation>
    <scope>NUCLEOTIDE SEQUENCE [LARGE SCALE GENOMIC DNA]</scope>
</reference>
<reference key="4">
    <citation type="submission" date="2001-01" db="EMBL/GenBank/DDBJ databases">
        <title>The sequence variation of human neuronal PAS domain protein 1 (NPAS1).</title>
        <authorList>
            <person name="Ohe N."/>
            <person name="Saito K."/>
            <person name="Kaneko H."/>
        </authorList>
    </citation>
    <scope>NUCLEOTIDE SEQUENCE [MRNA] (ISOFORM 1)</scope>
    <source>
        <tissue>Fetal brain</tissue>
    </source>
</reference>
<reference key="5">
    <citation type="journal article" date="2004" name="Genome Res.">
        <title>The status, quality, and expansion of the NIH full-length cDNA project: the Mammalian Gene Collection (MGC).</title>
        <authorList>
            <consortium name="The MGC Project Team"/>
        </authorList>
    </citation>
    <scope>NUCLEOTIDE SEQUENCE [LARGE SCALE MRNA] (ISOFORM 1)</scope>
    <source>
        <tissue>Brain</tissue>
    </source>
</reference>
<reference key="6">
    <citation type="journal article" date="1997" name="J. Biol. Chem.">
        <title>Characterization of a subset of the basic-helix-loop-helix-PAS superfamily that interacts with components of the dioxin signaling pathway.</title>
        <authorList>
            <person name="Hogenesch J.B."/>
            <person name="Chan W.K."/>
            <person name="Jackiw V.H."/>
            <person name="Brown R.C."/>
            <person name="Gu Y.-Z."/>
            <person name="Pray-Grant M."/>
            <person name="Perdew G.H."/>
            <person name="Bradfield C.A."/>
        </authorList>
    </citation>
    <scope>NUCLEOTIDE SEQUENCE [MRNA] OF 110-590 (ISOFORM 1)</scope>
    <source>
        <tissue>Hepatoma</tissue>
    </source>
</reference>
<protein>
    <recommendedName>
        <fullName>Neuronal PAS domain-containing protein 1</fullName>
        <shortName>Neuronal PAS1</shortName>
    </recommendedName>
    <alternativeName>
        <fullName>Basic-helix-loop-helix-PAS protein MOP5</fullName>
    </alternativeName>
    <alternativeName>
        <fullName>Class E basic helix-loop-helix protein 11</fullName>
        <shortName>bHLHe11</shortName>
    </alternativeName>
    <alternativeName>
        <fullName>Member of PAS protein 5</fullName>
    </alternativeName>
    <alternativeName>
        <fullName>PAS domain-containing protein 5</fullName>
    </alternativeName>
</protein>
<feature type="chain" id="PRO_0000127404" description="Neuronal PAS domain-containing protein 1">
    <location>
        <begin position="1"/>
        <end position="590"/>
    </location>
</feature>
<feature type="domain" description="bHLH" evidence="4">
    <location>
        <begin position="45"/>
        <end position="98"/>
    </location>
</feature>
<feature type="domain" description="PAS 1" evidence="3">
    <location>
        <begin position="135"/>
        <end position="207"/>
    </location>
</feature>
<feature type="domain" description="PAS 2" evidence="3">
    <location>
        <begin position="293"/>
        <end position="359"/>
    </location>
</feature>
<feature type="domain" description="PAC">
    <location>
        <begin position="365"/>
        <end position="408"/>
    </location>
</feature>
<feature type="region of interest" description="Disordered" evidence="5">
    <location>
        <begin position="198"/>
        <end position="229"/>
    </location>
</feature>
<feature type="region of interest" description="Disordered" evidence="5">
    <location>
        <begin position="425"/>
        <end position="494"/>
    </location>
</feature>
<feature type="compositionally biased region" description="Low complexity" evidence="5">
    <location>
        <begin position="212"/>
        <end position="222"/>
    </location>
</feature>
<feature type="compositionally biased region" description="Pro residues" evidence="5">
    <location>
        <begin position="433"/>
        <end position="442"/>
    </location>
</feature>
<feature type="compositionally biased region" description="Basic and acidic residues" evidence="5">
    <location>
        <begin position="463"/>
        <end position="476"/>
    </location>
</feature>
<feature type="splice variant" id="VSP_054280" description="In isoform 2." evidence="6">
    <location>
        <begin position="1"/>
        <end position="176"/>
    </location>
</feature>
<feature type="splice variant" id="VSP_054281" description="In isoform 2." evidence="6">
    <original>LLDKGQVMTGYYRWLQRAGGFVWLQSVATVAGSGKSPGEHHVLWVSHVLSQAEG</original>
    <variation>SCRGLRVAAVCGHSGWEREEPRGAPCALGQPRAQPSRGWPNSFGCLPASSQRGL</variation>
    <location>
        <begin position="357"/>
        <end position="410"/>
    </location>
</feature>
<feature type="splice variant" id="VSP_054282" description="In isoform 2." evidence="6">
    <location>
        <begin position="411"/>
        <end position="590"/>
    </location>
</feature>
<feature type="sequence conflict" description="In Ref. 1; AAB47248." evidence="7" ref="1">
    <original>S</original>
    <variation>I</variation>
    <location>
        <position position="80"/>
    </location>
</feature>
<feature type="sequence conflict" description="In Ref. 6." evidence="7" ref="6">
    <original>LRAAGPPAGLAPGRRGPAALVSEVF</original>
    <variation>NSRRPALRAAAAGARPAGGPGSQPP</variation>
    <location>
        <begin position="110"/>
        <end position="134"/>
    </location>
</feature>
<feature type="sequence conflict" description="In Ref. 1; AAB47248." evidence="7" ref="1">
    <original>P</original>
    <variation>T</variation>
    <location>
        <position position="203"/>
    </location>
</feature>
<feature type="sequence conflict" description="In Ref. 1; AAB47248." evidence="7" ref="1">
    <original>P</original>
    <variation>S</variation>
    <location>
        <position position="211"/>
    </location>
</feature>
<feature type="sequence conflict" description="In Ref. 1; AAB47248." evidence="7" ref="1">
    <original>A</original>
    <variation>V</variation>
    <location>
        <position position="449"/>
    </location>
</feature>
<evidence type="ECO:0000250" key="1"/>
<evidence type="ECO:0000250" key="2">
    <source>
        <dbReference type="UniProtKB" id="P97459"/>
    </source>
</evidence>
<evidence type="ECO:0000255" key="3">
    <source>
        <dbReference type="PROSITE-ProRule" id="PRU00140"/>
    </source>
</evidence>
<evidence type="ECO:0000255" key="4">
    <source>
        <dbReference type="PROSITE-ProRule" id="PRU00981"/>
    </source>
</evidence>
<evidence type="ECO:0000256" key="5">
    <source>
        <dbReference type="SAM" id="MobiDB-lite"/>
    </source>
</evidence>
<evidence type="ECO:0000303" key="6">
    <source>
    </source>
</evidence>
<evidence type="ECO:0000305" key="7"/>